<dbReference type="EMBL" id="AY305837">
    <property type="protein sequence ID" value="AAR11982.1"/>
    <property type="molecule type" value="mRNA"/>
</dbReference>
<dbReference type="EMBL" id="FO080584">
    <property type="protein sequence ID" value="CCD64873.1"/>
    <property type="molecule type" value="Genomic_DNA"/>
</dbReference>
<dbReference type="PIR" id="T31823">
    <property type="entry name" value="T31823"/>
</dbReference>
<dbReference type="RefSeq" id="NP_504070.2">
    <property type="nucleotide sequence ID" value="NM_071669.5"/>
</dbReference>
<dbReference type="SMR" id="O16391"/>
<dbReference type="STRING" id="6239.C17E7.8b.1"/>
<dbReference type="EnsemblMetazoa" id="C17E7.8a.1">
    <property type="protein sequence ID" value="C17E7.8a.1"/>
    <property type="gene ID" value="WBGene00003714"/>
</dbReference>
<dbReference type="GeneID" id="182733"/>
<dbReference type="KEGG" id="cel:CELE_C17E7.8"/>
<dbReference type="UCSC" id="C17E7.8b">
    <property type="organism name" value="c. elegans"/>
</dbReference>
<dbReference type="AGR" id="WB:WBGene00003714"/>
<dbReference type="CTD" id="182733"/>
<dbReference type="WormBase" id="C17E7.8a">
    <property type="protein sequence ID" value="CE30728"/>
    <property type="gene ID" value="WBGene00003714"/>
    <property type="gene designation" value="nhr-124"/>
</dbReference>
<dbReference type="GeneTree" id="ENSGT00970000196609"/>
<dbReference type="InParanoid" id="O16391"/>
<dbReference type="OrthoDB" id="5855364at2759"/>
<dbReference type="PhylomeDB" id="O16391"/>
<dbReference type="PRO" id="PR:O16391"/>
<dbReference type="Proteomes" id="UP000001940">
    <property type="component" value="Chromosome V"/>
</dbReference>
<dbReference type="Bgee" id="WBGene00003714">
    <property type="expression patterns" value="Expressed in embryo and 2 other cell types or tissues"/>
</dbReference>
<dbReference type="ExpressionAtlas" id="O16391">
    <property type="expression patterns" value="baseline and differential"/>
</dbReference>
<dbReference type="GO" id="GO:0005634">
    <property type="term" value="C:nucleus"/>
    <property type="evidence" value="ECO:0007669"/>
    <property type="project" value="UniProtKB-SubCell"/>
</dbReference>
<dbReference type="GO" id="GO:0003700">
    <property type="term" value="F:DNA-binding transcription factor activity"/>
    <property type="evidence" value="ECO:0007669"/>
    <property type="project" value="InterPro"/>
</dbReference>
<dbReference type="GO" id="GO:0000978">
    <property type="term" value="F:RNA polymerase II cis-regulatory region sequence-specific DNA binding"/>
    <property type="evidence" value="ECO:0007669"/>
    <property type="project" value="InterPro"/>
</dbReference>
<dbReference type="GO" id="GO:0008270">
    <property type="term" value="F:zinc ion binding"/>
    <property type="evidence" value="ECO:0007669"/>
    <property type="project" value="UniProtKB-KW"/>
</dbReference>
<dbReference type="CDD" id="cd06960">
    <property type="entry name" value="NR_DBD_HNF4A"/>
    <property type="match status" value="1"/>
</dbReference>
<dbReference type="Gene3D" id="3.30.50.10">
    <property type="entry name" value="Erythroid Transcription Factor GATA-1, subunit A"/>
    <property type="match status" value="1"/>
</dbReference>
<dbReference type="Gene3D" id="1.10.565.10">
    <property type="entry name" value="Retinoid X Receptor"/>
    <property type="match status" value="1"/>
</dbReference>
<dbReference type="InterPro" id="IPR049636">
    <property type="entry name" value="HNF4-like_DBD"/>
</dbReference>
<dbReference type="InterPro" id="IPR035500">
    <property type="entry name" value="NHR-like_dom_sf"/>
</dbReference>
<dbReference type="InterPro" id="IPR000536">
    <property type="entry name" value="Nucl_hrmn_rcpt_lig-bd"/>
</dbReference>
<dbReference type="InterPro" id="IPR001628">
    <property type="entry name" value="Znf_hrmn_rcpt"/>
</dbReference>
<dbReference type="InterPro" id="IPR013088">
    <property type="entry name" value="Znf_NHR/GATA"/>
</dbReference>
<dbReference type="PANTHER" id="PTHR45886:SF14">
    <property type="entry name" value="NUCLEAR HORMONE RECEPTOR FAMILY-RELATED"/>
    <property type="match status" value="1"/>
</dbReference>
<dbReference type="PANTHER" id="PTHR45886">
    <property type="entry name" value="NUCLEAR HORMONE RECEPTOR FAMILY-RELATED-RELATED"/>
    <property type="match status" value="1"/>
</dbReference>
<dbReference type="Pfam" id="PF00104">
    <property type="entry name" value="Hormone_recep"/>
    <property type="match status" value="1"/>
</dbReference>
<dbReference type="Pfam" id="PF00105">
    <property type="entry name" value="zf-C4"/>
    <property type="match status" value="1"/>
</dbReference>
<dbReference type="PRINTS" id="PR00047">
    <property type="entry name" value="STROIDFINGER"/>
</dbReference>
<dbReference type="SMART" id="SM00430">
    <property type="entry name" value="HOLI"/>
    <property type="match status" value="1"/>
</dbReference>
<dbReference type="SMART" id="SM00399">
    <property type="entry name" value="ZnF_C4"/>
    <property type="match status" value="1"/>
</dbReference>
<dbReference type="SUPFAM" id="SSF57716">
    <property type="entry name" value="Glucocorticoid receptor-like (DNA-binding domain)"/>
    <property type="match status" value="1"/>
</dbReference>
<dbReference type="SUPFAM" id="SSF48508">
    <property type="entry name" value="Nuclear receptor ligand-binding domain"/>
    <property type="match status" value="1"/>
</dbReference>
<dbReference type="PROSITE" id="PS51843">
    <property type="entry name" value="NR_LBD"/>
    <property type="match status" value="1"/>
</dbReference>
<dbReference type="PROSITE" id="PS00031">
    <property type="entry name" value="NUCLEAR_REC_DBD_1"/>
    <property type="match status" value="1"/>
</dbReference>
<dbReference type="PROSITE" id="PS51030">
    <property type="entry name" value="NUCLEAR_REC_DBD_2"/>
    <property type="match status" value="1"/>
</dbReference>
<reference key="1">
    <citation type="journal article" date="2005" name="J. Mol. Evol.">
        <title>Explosive lineage-specific expansion of the orphan nuclear receptor HNF4 in nematodes.</title>
        <authorList>
            <person name="Robinson-Rechavi M."/>
            <person name="Maina C.V."/>
            <person name="Gissendanner C.R."/>
            <person name="Laudet V."/>
            <person name="Sluder A."/>
        </authorList>
    </citation>
    <scope>NUCLEOTIDE SEQUENCE [MRNA]</scope>
</reference>
<reference key="2">
    <citation type="journal article" date="1998" name="Science">
        <title>Genome sequence of the nematode C. elegans: a platform for investigating biology.</title>
        <authorList>
            <consortium name="The C. elegans sequencing consortium"/>
        </authorList>
    </citation>
    <scope>NUCLEOTIDE SEQUENCE [LARGE SCALE GENOMIC DNA]</scope>
    <source>
        <strain>Bristol N2</strain>
    </source>
</reference>
<organism>
    <name type="scientific">Caenorhabditis elegans</name>
    <dbReference type="NCBI Taxonomy" id="6239"/>
    <lineage>
        <taxon>Eukaryota</taxon>
        <taxon>Metazoa</taxon>
        <taxon>Ecdysozoa</taxon>
        <taxon>Nematoda</taxon>
        <taxon>Chromadorea</taxon>
        <taxon>Rhabditida</taxon>
        <taxon>Rhabditina</taxon>
        <taxon>Rhabditomorpha</taxon>
        <taxon>Rhabditoidea</taxon>
        <taxon>Rhabditidae</taxon>
        <taxon>Peloderinae</taxon>
        <taxon>Caenorhabditis</taxon>
    </lineage>
</organism>
<name>NH124_CAEEL</name>
<comment type="function">
    <text>Orphan nuclear receptor.</text>
</comment>
<comment type="subcellular location">
    <subcellularLocation>
        <location evidence="1">Nucleus</location>
    </subcellularLocation>
</comment>
<comment type="similarity">
    <text evidence="3">Belongs to the nuclear hormone receptor family.</text>
</comment>
<gene>
    <name type="primary">nhr-124</name>
    <name type="ORF">C17E7.8</name>
</gene>
<sequence>MSGTTISSDRPNICAICHQKAFGYNYEVVSCNACKMFFRRAHAEKIDDFCKKGGKCFDGDDLLTSRPKCRSCRYKKCVNLGMRYHNSSESQTQSDEEPSPKQSVVAVVPQHIITQAHIDSTFFQHLHALNETRYNAYCVINICEDPSFCDLVAQGSKLSVYLRPQEIEWENTERKLKPWGSLGVLLAVEVCKGLSFYNDLLLSDRVLLLKNVAFKSHHLSVAYDSFIQKKGRVLAPTGTEMFPDVLFEIPKCREIIMDLLTSPMKPLMELQITESEYLLLNMIVICNPAIQGMSPSGQDLLSRHQQVYARILLQMCMVSNPRTGPGRYAAILAINQRLDRQSVITNRVVQCLREYWAPNFFFSKILTEACRSDVYY</sequence>
<keyword id="KW-0238">DNA-binding</keyword>
<keyword id="KW-0479">Metal-binding</keyword>
<keyword id="KW-0539">Nucleus</keyword>
<keyword id="KW-0675">Receptor</keyword>
<keyword id="KW-1185">Reference proteome</keyword>
<keyword id="KW-0804">Transcription</keyword>
<keyword id="KW-0805">Transcription regulation</keyword>
<keyword id="KW-0862">Zinc</keyword>
<keyword id="KW-0863">Zinc-finger</keyword>
<proteinExistence type="evidence at transcript level"/>
<protein>
    <recommendedName>
        <fullName>Nuclear hormone receptor family member nhr-124</fullName>
    </recommendedName>
</protein>
<evidence type="ECO:0000255" key="1">
    <source>
        <dbReference type="PROSITE-ProRule" id="PRU00407"/>
    </source>
</evidence>
<evidence type="ECO:0000255" key="2">
    <source>
        <dbReference type="PROSITE-ProRule" id="PRU01189"/>
    </source>
</evidence>
<evidence type="ECO:0000305" key="3"/>
<feature type="chain" id="PRO_0000223591" description="Nuclear hormone receptor family member nhr-124">
    <location>
        <begin position="1"/>
        <end position="376"/>
    </location>
</feature>
<feature type="domain" description="NR LBD" evidence="2">
    <location>
        <begin position="125"/>
        <end position="371"/>
    </location>
</feature>
<feature type="DNA-binding region" description="Nuclear receptor" evidence="1">
    <location>
        <begin position="11"/>
        <end position="89"/>
    </location>
</feature>
<feature type="zinc finger region" description="NR C4-type" evidence="1">
    <location>
        <begin position="14"/>
        <end position="34"/>
    </location>
</feature>
<feature type="zinc finger region" description="NR C4-type" evidence="1">
    <location>
        <begin position="50"/>
        <end position="72"/>
    </location>
</feature>
<accession>O16391</accession>